<keyword id="KW-0067">ATP-binding</keyword>
<keyword id="KW-0903">Direct protein sequencing</keyword>
<keyword id="KW-0225">Disease variant</keyword>
<keyword id="KW-0378">Hydrolase</keyword>
<keyword id="KW-0472">Membrane</keyword>
<keyword id="KW-0479">Metal-binding</keyword>
<keyword id="KW-0482">Metalloprotease</keyword>
<keyword id="KW-0496">Mitochondrion</keyword>
<keyword id="KW-0999">Mitochondrion inner membrane</keyword>
<keyword id="KW-0547">Nucleotide-binding</keyword>
<keyword id="KW-0645">Protease</keyword>
<keyword id="KW-1185">Reference proteome</keyword>
<keyword id="KW-0809">Transit peptide</keyword>
<keyword id="KW-0812">Transmembrane</keyword>
<keyword id="KW-1133">Transmembrane helix</keyword>
<keyword id="KW-0862">Zinc</keyword>
<name>AFG32_MOUSE</name>
<feature type="transit peptide" description="Mitochondrion" evidence="8">
    <location>
        <begin position="1"/>
        <end position="38"/>
    </location>
</feature>
<feature type="propeptide" id="PRO_0000442313" description="Removed in mature form" evidence="21">
    <location>
        <begin position="39"/>
        <end position="66"/>
    </location>
</feature>
<feature type="chain" id="PRO_0000442314" description="Mitochondrial inner membrane m-AAA protease component AFG3L2">
    <location>
        <begin position="67"/>
        <end position="802"/>
    </location>
</feature>
<feature type="transmembrane region" description="Helical" evidence="2">
    <location>
        <begin position="142"/>
        <end position="162"/>
    </location>
</feature>
<feature type="transmembrane region" description="Helical" evidence="2">
    <location>
        <begin position="250"/>
        <end position="270"/>
    </location>
</feature>
<feature type="region of interest" description="Disordered" evidence="3">
    <location>
        <begin position="76"/>
        <end position="124"/>
    </location>
</feature>
<feature type="region of interest" description="Disordered" evidence="3">
    <location>
        <begin position="759"/>
        <end position="802"/>
    </location>
</feature>
<feature type="compositionally biased region" description="Basic and acidic residues" evidence="3">
    <location>
        <begin position="85"/>
        <end position="99"/>
    </location>
</feature>
<feature type="compositionally biased region" description="Basic and acidic residues" evidence="3">
    <location>
        <begin position="778"/>
        <end position="802"/>
    </location>
</feature>
<feature type="active site" evidence="21">
    <location>
        <position position="574"/>
    </location>
</feature>
<feature type="binding site" evidence="1">
    <location>
        <position position="309"/>
    </location>
    <ligand>
        <name>ATP</name>
        <dbReference type="ChEBI" id="CHEBI:30616"/>
    </ligand>
</feature>
<feature type="binding site" evidence="1">
    <location>
        <position position="310"/>
    </location>
    <ligand>
        <name>ATP</name>
        <dbReference type="ChEBI" id="CHEBI:30616"/>
    </ligand>
</feature>
<feature type="binding site" evidence="1">
    <location>
        <position position="351"/>
    </location>
    <ligand>
        <name>ATP</name>
        <dbReference type="ChEBI" id="CHEBI:30616"/>
    </ligand>
</feature>
<feature type="binding site" evidence="1">
    <location>
        <position position="352"/>
    </location>
    <ligand>
        <name>ATP</name>
        <dbReference type="ChEBI" id="CHEBI:30616"/>
    </ligand>
</feature>
<feature type="binding site" evidence="1">
    <location>
        <position position="353"/>
    </location>
    <ligand>
        <name>ATP</name>
        <dbReference type="ChEBI" id="CHEBI:30616"/>
    </ligand>
</feature>
<feature type="binding site" evidence="1">
    <location>
        <position position="354"/>
    </location>
    <ligand>
        <name>ATP</name>
        <dbReference type="ChEBI" id="CHEBI:30616"/>
    </ligand>
</feature>
<feature type="binding site" evidence="1">
    <location>
        <position position="355"/>
    </location>
    <ligand>
        <name>ATP</name>
        <dbReference type="ChEBI" id="CHEBI:30616"/>
    </ligand>
</feature>
<feature type="binding site" evidence="1">
    <location>
        <position position="489"/>
    </location>
    <ligand>
        <name>ATP</name>
        <dbReference type="ChEBI" id="CHEBI:30616"/>
    </ligand>
</feature>
<feature type="binding site" evidence="1">
    <location>
        <position position="573"/>
    </location>
    <ligand>
        <name>Zn(2+)</name>
        <dbReference type="ChEBI" id="CHEBI:29105"/>
        <note>catalytic</note>
    </ligand>
</feature>
<feature type="binding site" evidence="1">
    <location>
        <position position="577"/>
    </location>
    <ligand>
        <name>Zn(2+)</name>
        <dbReference type="ChEBI" id="CHEBI:29105"/>
        <note>catalytic</note>
    </ligand>
</feature>
<feature type="binding site" evidence="1">
    <location>
        <position position="648"/>
    </location>
    <ligand>
        <name>Zn(2+)</name>
        <dbReference type="ChEBI" id="CHEBI:29105"/>
        <note>catalytic</note>
    </ligand>
</feature>
<feature type="modified residue" description="N6-succinyllysine" evidence="23">
    <location>
        <position position="116"/>
    </location>
</feature>
<feature type="sequence variant" description="In par." evidence="7">
    <original>R</original>
    <variation>G</variation>
    <location>
        <position position="389"/>
    </location>
</feature>
<feature type="mutagenesis site" description="Absence of proteolytic activity. Loss of its processing into the mature form." evidence="8">
    <original>E</original>
    <variation>Q</variation>
    <location>
        <position position="574"/>
    </location>
</feature>
<feature type="mutagenesis site" description="Knockin heterozygous mice develop normally but adult mice show signs of cerebellar ataxia. Cells from mutant mice display altered mitochondrial bioenergetics, with decreased basal oxygen consumption rate, ATP synthesis and mitochondrial membrane potential. Mitochondrial network formation and morphology is also altered, with greatly reduced expression of fusogenic Opa1 isoforms." evidence="18">
    <original>M</original>
    <variation>R</variation>
    <location>
        <position position="665"/>
    </location>
</feature>
<accession>Q8JZQ2</accession>
<reference key="1">
    <citation type="journal article" date="2004" name="Genome Res.">
        <title>The status, quality, and expansion of the NIH full-length cDNA project: the Mammalian Gene Collection (MGC).</title>
        <authorList>
            <consortium name="The MGC Project Team"/>
        </authorList>
    </citation>
    <scope>NUCLEOTIDE SEQUENCE [LARGE SCALE MRNA]</scope>
    <source>
        <strain>C57BL/6J</strain>
        <strain>FVB/N</strain>
        <tissue>Brain</tissue>
        <tissue>Kidney</tissue>
    </source>
</reference>
<reference key="2">
    <citation type="journal article" date="2009" name="Mol. Biol. Cell">
        <title>Autocatalytic processing of m-AAA protease subunits in mitochondria.</title>
        <authorList>
            <person name="Koppen M."/>
            <person name="Bonn F."/>
            <person name="Ehses S."/>
            <person name="Langer T."/>
        </authorList>
    </citation>
    <scope>PROTEIN SEQUENCE OF 39-48 AND 67-74</scope>
    <scope>FUNCTION</scope>
    <scope>PROTEOLYTIC PROCESSING</scope>
    <scope>INTERACTION WITH SPG7 AND AFG3L1</scope>
    <scope>SUBUNIT</scope>
    <scope>SUBCELLULAR LOCATION</scope>
    <scope>ACTIVE SITE</scope>
    <scope>MUTAGENESIS OF GLU-574</scope>
</reference>
<reference key="3">
    <citation type="submission" date="2007-04" db="UniProtKB">
        <authorList>
            <person name="Lubec G."/>
            <person name="Kang S.U."/>
        </authorList>
    </citation>
    <scope>PROTEIN SEQUENCE OF 173-181; 283-296 AND 632-650</scope>
    <scope>IDENTIFICATION BY MASS SPECTROMETRY</scope>
    <source>
        <strain>C57BL/6J</strain>
        <tissue>Brain</tissue>
    </source>
</reference>
<reference key="4">
    <citation type="journal article" date="2005" name="Cell">
        <title>The m-AAA protease defective in hereditary spastic paraplegia controls ribosome assembly in mitochondria.</title>
        <authorList>
            <person name="Nolden M."/>
            <person name="Ehses S."/>
            <person name="Koppen M."/>
            <person name="Bernacchia A."/>
            <person name="Rugarli E.I."/>
            <person name="Langer T."/>
        </authorList>
    </citation>
    <scope>FUNCTION</scope>
    <scope>INTERACTION WITH SPG7</scope>
    <scope>DISRUPTION PHENOTYPE</scope>
</reference>
<reference key="5">
    <citation type="journal article" date="2007" name="Mol. Biol. Cell">
        <title>OPA1 processing reconstituted in yeast depends on the subunit composition of the m-AAA protease in mitochondria.</title>
        <authorList>
            <person name="Duvezin-Caubet S."/>
            <person name="Koppen M."/>
            <person name="Wagener J."/>
            <person name="Zick M."/>
            <person name="Israel L."/>
            <person name="Bernacchia A."/>
            <person name="Jagasia R."/>
            <person name="Rugarli E.I."/>
            <person name="Imhof A."/>
            <person name="Neupert W."/>
            <person name="Langer T."/>
            <person name="Reichert A.S."/>
        </authorList>
    </citation>
    <scope>FUNCTION</scope>
</reference>
<reference key="6">
    <citation type="journal article" date="2007" name="Mol. Cell. Biol.">
        <title>Variable and tissue-specific subunit composition of mitochondrial m-AAA protease complexes linked to hereditary spastic paraplegia.</title>
        <authorList>
            <person name="Koppen M."/>
            <person name="Metodiev M.D."/>
            <person name="Casari G."/>
            <person name="Rugarli E.I."/>
            <person name="Langer T."/>
        </authorList>
    </citation>
    <scope>SUBUNIT</scope>
</reference>
<reference key="7">
    <citation type="journal article" date="2008" name="J. Neurosci.">
        <title>The mitochondrial protease AFG3L2 is essential for axonal development.</title>
        <authorList>
            <person name="Maltecca F."/>
            <person name="Aghaie A."/>
            <person name="Schroeder D.G."/>
            <person name="Cassina L."/>
            <person name="Taylor B.A."/>
            <person name="Phillips S.J."/>
            <person name="Malaguti M."/>
            <person name="Previtali S."/>
            <person name="Guenet J.L."/>
            <person name="Quattrini A."/>
            <person name="Cox G.A."/>
            <person name="Casari G."/>
        </authorList>
    </citation>
    <scope>FUNCTION</scope>
    <scope>DISRUPTION PHENOTYPE</scope>
    <scope>VARIANT PAR GLY-389</scope>
</reference>
<reference key="8">
    <citation type="journal article" date="2009" name="J. Cell Biol.">
        <title>Regulation of OPA1 processing and mitochondrial fusion by m-AAA protease isoenzymes and OMA1.</title>
        <authorList>
            <person name="Ehses S."/>
            <person name="Raschke I."/>
            <person name="Mancuso G."/>
            <person name="Bernacchia A."/>
            <person name="Geimer S."/>
            <person name="Tondera D."/>
            <person name="Martinou J.C."/>
            <person name="Westermann B."/>
            <person name="Rugarli E.I."/>
            <person name="Langer T."/>
        </authorList>
    </citation>
    <scope>FUNCTION</scope>
</reference>
<reference key="9">
    <citation type="journal article" date="2010" name="Cell">
        <title>A tissue-specific atlas of mouse protein phosphorylation and expression.</title>
        <authorList>
            <person name="Huttlin E.L."/>
            <person name="Jedrychowski M.P."/>
            <person name="Elias J.E."/>
            <person name="Goswami T."/>
            <person name="Rad R."/>
            <person name="Beausoleil S.A."/>
            <person name="Villen J."/>
            <person name="Haas W."/>
            <person name="Sowa M.E."/>
            <person name="Gygi S.P."/>
        </authorList>
    </citation>
    <scope>IDENTIFICATION BY MASS SPECTROMETRY [LARGE SCALE ANALYSIS]</scope>
    <source>
        <tissue>Brain</tissue>
        <tissue>Brown adipose tissue</tissue>
        <tissue>Heart</tissue>
        <tissue>Kidney</tissue>
        <tissue>Liver</tissue>
        <tissue>Lung</tissue>
        <tissue>Pancreas</tissue>
        <tissue>Spleen</tissue>
        <tissue>Testis</tissue>
    </source>
</reference>
<reference key="10">
    <citation type="journal article" date="2010" name="Nat. Genet.">
        <title>Mutations in the mitochondrial protease gene AFG3L2 cause dominant hereditary ataxia SCA28.</title>
        <authorList>
            <person name="Di Bella D."/>
            <person name="Lazzaro F."/>
            <person name="Brusco A."/>
            <person name="Plumari M."/>
            <person name="Battaglia G."/>
            <person name="Pastore A."/>
            <person name="Finardi A."/>
            <person name="Cagnoli C."/>
            <person name="Tempia F."/>
            <person name="Frontali M."/>
            <person name="Veneziano L."/>
            <person name="Sacco T."/>
            <person name="Boda E."/>
            <person name="Brussino A."/>
            <person name="Bonn F."/>
            <person name="Castellotti B."/>
            <person name="Baratta S."/>
            <person name="Mariotti C."/>
            <person name="Gellera C."/>
            <person name="Fracasso V."/>
            <person name="Magri S."/>
            <person name="Langer T."/>
            <person name="Plevani P."/>
            <person name="Di Donato S."/>
            <person name="Muzi-Falconi M."/>
            <person name="Taroni F."/>
        </authorList>
    </citation>
    <scope>TISSUE SPECIFICITY</scope>
</reference>
<reference key="11">
    <citation type="journal article" date="2012" name="Hum. Mol. Genet.">
        <title>Respiratory dysfunction by AFG3L2 deficiency causes decreased mitochondrial calcium uptake via organellar network fragmentation.</title>
        <authorList>
            <person name="Maltecca F."/>
            <person name="De Stefani D."/>
            <person name="Cassina L."/>
            <person name="Consolato F."/>
            <person name="Wasilewski M."/>
            <person name="Scorrano L."/>
            <person name="Rizzuto R."/>
            <person name="Casari G."/>
        </authorList>
    </citation>
    <scope>FUNCTION</scope>
</reference>
<reference key="12">
    <citation type="journal article" date="2012" name="J. Clin. Invest.">
        <title>AFG3L2 supports mitochondrial protein synthesis and Purkinje cell survival.</title>
        <authorList>
            <person name="Almajan E.R."/>
            <person name="Richter R."/>
            <person name="Paeger L."/>
            <person name="Martinelli P."/>
            <person name="Barth E."/>
            <person name="Decker T."/>
            <person name="Larsson N.G."/>
            <person name="Kloppenburg P."/>
            <person name="Langer T."/>
            <person name="Rugarli E.I."/>
        </authorList>
    </citation>
    <scope>DISRUPTION PHENOTYPE</scope>
</reference>
<reference key="13">
    <citation type="journal article" date="2012" name="PLoS ONE">
        <title>Alternative splicing of Spg7, a gene involved in hereditary spastic paraplegia, encodes a variant of paraplegin targeted to the endoplasmic reticulum.</title>
        <authorList>
            <person name="Mancuso G."/>
            <person name="Barth E."/>
            <person name="Crivello P."/>
            <person name="Rugarli E.I."/>
        </authorList>
    </citation>
    <scope>INTERACTION WITH SPG7</scope>
</reference>
<reference key="14">
    <citation type="journal article" date="2013" name="Mol. Cell">
        <title>SIRT5-mediated lysine desuccinylation impacts diverse metabolic pathways.</title>
        <authorList>
            <person name="Park J."/>
            <person name="Chen Y."/>
            <person name="Tishkoff D.X."/>
            <person name="Peng C."/>
            <person name="Tan M."/>
            <person name="Dai L."/>
            <person name="Xie Z."/>
            <person name="Zhang Y."/>
            <person name="Zwaans B.M."/>
            <person name="Skinner M.E."/>
            <person name="Lombard D.B."/>
            <person name="Zhao Y."/>
        </authorList>
    </citation>
    <scope>SUCCINYLATION [LARGE SCALE ANALYSIS] AT LYS-116</scope>
    <scope>IDENTIFICATION BY MASS SPECTROMETRY [LARGE SCALE ANALYSIS]</scope>
    <source>
        <tissue>Liver</tissue>
    </source>
</reference>
<reference key="15">
    <citation type="journal article" date="2014" name="Cell Metab.">
        <title>DNAJC19, a mitochondrial cochaperone associated with cardiomyopathy, forms a complex with prohibitins to regulate cardiolipin remodeling.</title>
        <authorList>
            <person name="Richter-Dennerlein R."/>
            <person name="Korwitz A."/>
            <person name="Haag M."/>
            <person name="Tatsuta T."/>
            <person name="Dargazanli S."/>
            <person name="Baker M."/>
            <person name="Decker T."/>
            <person name="Lamkemeyer T."/>
            <person name="Rugarli E.I."/>
            <person name="Langer T."/>
        </authorList>
    </citation>
    <scope>SUBCELLULAR LOCATION</scope>
    <scope>INTERACTION WITH DNAJC19 AND PHB2</scope>
</reference>
<reference key="16">
    <citation type="journal article" date="2014" name="EMBO J.">
        <title>Loss of the m-AAA protease subunit AFG(3)L(2) causes mitochondrial transport defects and tau hyperphosphorylation.</title>
        <authorList>
            <person name="Kondadi A.K."/>
            <person name="Wang S."/>
            <person name="Montagner S."/>
            <person name="Kladt N."/>
            <person name="Korwitz A."/>
            <person name="Martinelli P."/>
            <person name="Herholz D."/>
            <person name="Baker M.J."/>
            <person name="Schauss A.C."/>
            <person name="Langer T."/>
            <person name="Rugarli E.I."/>
        </authorList>
    </citation>
    <scope>DISRUPTION PHENOTYPE</scope>
</reference>
<reference key="17">
    <citation type="journal article" date="2016" name="Mol. Cell">
        <title>The m-AAA protease associated with neurodegeneration limits MCU activity in mitochondria.</title>
        <authorList>
            <person name="Koenig T."/>
            <person name="Troeder S.E."/>
            <person name="Bakka K."/>
            <person name="Korwitz A."/>
            <person name="Richter-Dennerlein R."/>
            <person name="Lampe P.A."/>
            <person name="Patron M."/>
            <person name="Muehlmeister M."/>
            <person name="Guerrero-Castillo S."/>
            <person name="Brandt U."/>
            <person name="Decker T."/>
            <person name="Lauria I."/>
            <person name="Paggio A."/>
            <person name="Rizzuto R."/>
            <person name="Rugarli E.I."/>
            <person name="De Stefani D."/>
            <person name="Langer T."/>
        </authorList>
    </citation>
    <scope>FUNCTION</scope>
    <scope>INTERACTION WITH MAIP1</scope>
</reference>
<reference key="18">
    <citation type="journal article" date="2016" name="PLoS Genet.">
        <title>The mitochondrial m-AAA protease prevents demyelination and hair greying.</title>
        <authorList>
            <person name="Wang S."/>
            <person name="Jacquemyn J."/>
            <person name="Murru S."/>
            <person name="Martinelli P."/>
            <person name="Barth E."/>
            <person name="Langer T."/>
            <person name="Niessen C.M."/>
            <person name="Rugarli E.I."/>
        </authorList>
    </citation>
    <scope>DISRUPTION PHENOTYPE</scope>
</reference>
<reference key="19">
    <citation type="journal article" date="2019" name="Neurobiol. Dis.">
        <title>Mice harbouring a SCA28 patient mutation in AFG3L2 develop late-onset ataxia associated with enhanced mitochondrial proteotoxicity.</title>
        <authorList>
            <person name="Mancini C."/>
            <person name="Hoxha E."/>
            <person name="Iommarini L."/>
            <person name="Brussino A."/>
            <person name="Richter U."/>
            <person name="Montarolo F."/>
            <person name="Cagnoli C."/>
            <person name="Parolisi R."/>
            <person name="Gondor Morosini D.I."/>
            <person name="Nicolo V."/>
            <person name="Maltecca F."/>
            <person name="Muratori L."/>
            <person name="Ronchi G."/>
            <person name="Geuna S."/>
            <person name="Arnaboldi F."/>
            <person name="Donetti E."/>
            <person name="Giorgio E."/>
            <person name="Cavalieri S."/>
            <person name="Di Gregorio E."/>
            <person name="Pozzi E."/>
            <person name="Ferrero M."/>
            <person name="Riberi E."/>
            <person name="Casari G."/>
            <person name="Altruda F."/>
            <person name="Turco E."/>
            <person name="Gasparre G."/>
            <person name="Battersby B.J."/>
            <person name="Porcelli A.M."/>
            <person name="Ferrero E."/>
            <person name="Brusco A."/>
            <person name="Tempia F."/>
        </authorList>
    </citation>
    <scope>FUNCTION</scope>
    <scope>DISRUPTION PHENOTYPE</scope>
    <scope>MUTAGENESIS OF MET-665</scope>
</reference>
<sequence length="802" mass="89519">MAHRCLLLWSRGGCRRGLPPLLVPRGCLGPDRRPCLRTLYQYATVQTASSRRSLLRDVIAAYQRFCSRPPKGFEKYFPNGKNGKKASEPKEAVGEKKEPQPSGPQPSGGAGGGGGKRRGKKEDSHWWSRFQKGDFPWDDKDFRMYFLWTALFWGGVMIYFVFKSSGREITWKDFVNNYLSKGVVDRLEVVNKRFVRVTFTPGKTPVDGQYVWFNIGSVDTFERNLETLQQELGIEGENRVPVVYIAESDGSFLLSMLPTVLIIAFLLYTIRRGPAGIGRTGRGMGGLFSVGETTAKVLKDEIDVKFKDVAGCEEAKLEIMEFVNFLKNPKQYQDLGAKIPKGAILTGPPGTGKTLLAKATAGEANVPFITVSGSEFLEMFVGVGPARVRDLFALARKNAPCILFIDEIDAVGRKRGRGNFGGQSEQENTLNQLLVEMDGFNTTTNVVILAGTNRPDILDPALLRPGRFDRQIFIGPPDIKGRASIFKVHLRPLKLDSALEKDKLARKLASLTPGFSGADVANVCNEAALIAARHLSDAINEKHFEQAIERVIGGLEKKTQVLQPEEKKTVAYHEAGHAVAGWYLEHADPLLKVSIIPRGKGLGYAQYLPKEQYLYTKEQLLDRMCMTLGGRVSEEIFFGRITTGAQDDLRKVTQSAYAQIVQFGMNEKVGQISFDLPRQGDMVLEKPYSEATARMIDDEVRILISDAYRRTVALLTEKKADVEKVALLLLEKEVLDKNDMVQLLGPRPFTEKSTYEEFVEGTGSLDEDTSLPEGLQDWNKEREKEEKKEKEKEEPLNEKVVS</sequence>
<comment type="function">
    <text evidence="1 4 6 7 9 12 16 18">Catalytic component of the m-AAA protease, a protease that plays a key role in proteostasis of inner mitochondrial membrane proteins, and which is essential for axonal and neuron development (PubMed:16239145, PubMed:18337413, PubMed:22678058, PubMed:27642048, PubMed:30389403). AFG3L2 possesses both ATPase and protease activities: the ATPase activity is required to unfold substrates, threading them into the internal proteolytic cavity for hydrolysis into small peptide fragments (By similarity). The m-AAA protease carries out protein quality control in the inner membrane of the mitochondria by mediating degradation of mistranslated or misfolded polypeptides (By similarity). The m-AAA protease complex also promotes the processing and maturation of mitochondrial proteins, such as MRPL32/bL32m, PINK1 and SP7 (PubMed:16239145). Mediates protein maturation of the mitochondrial ribosomal subunit MRPL32/bL32m by catalyzing the cleavage of the presequence of MRPL32/bL32m prior to assembly into the mitochondrial ribosome (PubMed:16239145). Required for SPG7 maturation into its active mature form after SPG7 cleavage by mitochondrial-processing peptidase (MPP) (By similarity). Required for the maturation of PINK1 into its 52kDa mature form after its cleavage by mitochondrial-processing peptidase (MPP) (By similarity). Acts as a regulator of calcium in neurons by mediating degradation of SMDT1/EMRE before its assembly with the uniporter complex, limiting the availability of SMDT1/EMRE for MCU assembly and promoting efficient assembly of gatekeeper subunits with MCU (By similarity). Promotes the proteolytic degradation of GHITM upon hyperpolarization of mitochondria: progressive GHITM degradation leads to respiratory complex I degradation and broad reshaping of the mitochondrial proteome by AFG3L2 (By similarity). Also acts as a regulator of mitochondrial glutathione homeostasis by mediating cleavage and degradation of SLC25A39 (By similarity). SLC25A39 cleavage is prevented when SLC25A39 binds iron-sulfur (By similarity). Involved in the regulation of OMA1-dependent processing of OPA1 (PubMed:17615298, PubMed:20038678). May act by mediating processing of OMA1 precursor, participating in OMA1 maturation (By similarity).</text>
</comment>
<comment type="catalytic activity">
    <reaction evidence="1">
        <text>ATP + H2O = ADP + phosphate + H(+)</text>
        <dbReference type="Rhea" id="RHEA:13065"/>
        <dbReference type="ChEBI" id="CHEBI:15377"/>
        <dbReference type="ChEBI" id="CHEBI:15378"/>
        <dbReference type="ChEBI" id="CHEBI:30616"/>
        <dbReference type="ChEBI" id="CHEBI:43474"/>
        <dbReference type="ChEBI" id="CHEBI:456216"/>
    </reaction>
    <physiologicalReaction direction="left-to-right" evidence="1">
        <dbReference type="Rhea" id="RHEA:13066"/>
    </physiologicalReaction>
</comment>
<comment type="cofactor">
    <cofactor evidence="1">
        <name>Zn(2+)</name>
        <dbReference type="ChEBI" id="CHEBI:29105"/>
    </cofactor>
    <text evidence="1">Binds 1 zinc ion per subunit.</text>
</comment>
<comment type="subunit">
    <text evidence="4 5 8 11 15 16">Homohexamer (PubMed:17101804). Forms heterohexamers with SPG7 and AFG3L1 (PubMed:17101804, PubMed:19656850, PubMed:22563492). The m-AAA protease is either composed of homohexamers of AFG3L2 or heterohexamers of AFG3L1, AFG3L2 and/or SPG7 (PubMed:16239145, PubMed:17101804, PubMed:19656850, PubMed:22563492). Interacts with MAIP1 (PubMed:17101804, PubMed:27642048). Interacts with DNAJC19 (PubMed:24856930). Interacts with PHB2 (PubMed:24856930).</text>
</comment>
<comment type="subcellular location">
    <subcellularLocation>
        <location evidence="8 15">Mitochondrion inner membrane</location>
        <topology evidence="2">Multi-pass membrane protein</topology>
    </subcellularLocation>
</comment>
<comment type="tissue specificity">
    <text evidence="10">Highly expressed in the cerebellar Purkinje cells.</text>
</comment>
<comment type="PTM">
    <text evidence="8">Upon import into the mitochondrion, the N-terminal transit peptide is cleaved to generate an intermediate form which undergoes autocatalytic proteolytic processing to generate the proteolytically active mature form.</text>
</comment>
<comment type="disease">
    <text evidence="7">Defects in Afg3l2 are the cause of the paralyze (par) phenotype, a spontaneous mutant strain. Par mice have a normal appearance and fertility but are significantly smaller than their littermates at 1 week of age and display a rapidly progressive loss of motor function in all limbs by 12-14 days. As the disease progresses, they lose the ability to support their own weight or turn themselves over when placed on their back and exhibit a typical posture with over extension of all limbs and uncoordinated movements. They rarely survive beyond 16 days of age, when they are completely paralyzed.</text>
</comment>
<comment type="disruption phenotype">
    <text evidence="4 7 13 14 17 18">Mice die at approximately 2 weeks and show a generalized defect in axonal development (PubMed:18337413, PubMed:30389403). Deletion in primary neurons leads to specific defects of anterograde transport of mitochondria associated with Tau hyperphosphorylation (PubMed:24681487). Cells display impaired processing and maturation of MRPL32/bL32m (PubMed:16239145). Conditional deletion in Purkinje cells leads to neurodegeneration and inflammatory response (PubMed:23041622). Before neurodegeneration, Purkinje cells display abnormal mitochondrial dynamics, characterized by fragmentation and altered distribution of mitochondria in the dendritic tree (PubMed:23041622). Moreover, Purkinje cells show defects in mitochondrially encoded respiratory chain subunits at early stages (PubMed:23041622). Conditional deletion in mature oligodendrocytes leads to early-on mitochondrial fragmentation and swelling, causing late-onset motor defects and myelin abnormalities (PubMed:27911893). Conditional deletion of both Afg3l1 and Afg3l2 in mature oligodendrocytes triggers progressive motor dysfunction and demyelination, leading to rapid oligodendrocyte cell death (PubMed:27911893). Conditional deletion of both Afg3l1 and Afg3l2 in mature oligodendrocytes also causes premature hair greying, due by progressive loss of melanoblasts that share a common developmental origin with Schwann cells (PubMed:27911893).</text>
</comment>
<comment type="similarity">
    <text evidence="20">In the N-terminal section; belongs to the AAA ATPase family.</text>
</comment>
<comment type="similarity">
    <text evidence="20">In the C-terminal section; belongs to the peptidase M41 family.</text>
</comment>
<organism>
    <name type="scientific">Mus musculus</name>
    <name type="common">Mouse</name>
    <dbReference type="NCBI Taxonomy" id="10090"/>
    <lineage>
        <taxon>Eukaryota</taxon>
        <taxon>Metazoa</taxon>
        <taxon>Chordata</taxon>
        <taxon>Craniata</taxon>
        <taxon>Vertebrata</taxon>
        <taxon>Euteleostomi</taxon>
        <taxon>Mammalia</taxon>
        <taxon>Eutheria</taxon>
        <taxon>Euarchontoglires</taxon>
        <taxon>Glires</taxon>
        <taxon>Rodentia</taxon>
        <taxon>Myomorpha</taxon>
        <taxon>Muroidea</taxon>
        <taxon>Muridae</taxon>
        <taxon>Murinae</taxon>
        <taxon>Mus</taxon>
        <taxon>Mus</taxon>
    </lineage>
</organism>
<dbReference type="EC" id="3.4.24.-" evidence="8"/>
<dbReference type="EC" id="3.6.-.-" evidence="1"/>
<dbReference type="EMBL" id="BC036999">
    <property type="protein sequence ID" value="AAH36999.1"/>
    <property type="molecule type" value="mRNA"/>
</dbReference>
<dbReference type="EMBL" id="BC043056">
    <property type="protein sequence ID" value="AAH43056.1"/>
    <property type="molecule type" value="mRNA"/>
</dbReference>
<dbReference type="CCDS" id="CCDS37847.1"/>
<dbReference type="RefSeq" id="NP_081406.1">
    <property type="nucleotide sequence ID" value="NM_027130.2"/>
</dbReference>
<dbReference type="BMRB" id="Q8JZQ2"/>
<dbReference type="SMR" id="Q8JZQ2"/>
<dbReference type="BioGRID" id="213561">
    <property type="interactions" value="26"/>
</dbReference>
<dbReference type="FunCoup" id="Q8JZQ2">
    <property type="interactions" value="2822"/>
</dbReference>
<dbReference type="IntAct" id="Q8JZQ2">
    <property type="interactions" value="5"/>
</dbReference>
<dbReference type="MINT" id="Q8JZQ2"/>
<dbReference type="STRING" id="10090.ENSMUSP00000025408"/>
<dbReference type="MEROPS" id="M41.007"/>
<dbReference type="GlyGen" id="Q8JZQ2">
    <property type="glycosylation" value="2 sites, 1 O-linked glycan (2 sites)"/>
</dbReference>
<dbReference type="iPTMnet" id="Q8JZQ2"/>
<dbReference type="PhosphoSitePlus" id="Q8JZQ2"/>
<dbReference type="SwissPalm" id="Q8JZQ2"/>
<dbReference type="jPOST" id="Q8JZQ2"/>
<dbReference type="PaxDb" id="10090-ENSMUSP00000025408"/>
<dbReference type="PeptideAtlas" id="Q8JZQ2"/>
<dbReference type="ProteomicsDB" id="296075"/>
<dbReference type="Pumba" id="Q8JZQ2"/>
<dbReference type="Antibodypedia" id="1387">
    <property type="antibodies" value="264 antibodies from 31 providers"/>
</dbReference>
<dbReference type="Ensembl" id="ENSMUST00000025408.10">
    <property type="protein sequence ID" value="ENSMUSP00000025408.9"/>
    <property type="gene ID" value="ENSMUSG00000024527.11"/>
</dbReference>
<dbReference type="GeneID" id="69597"/>
<dbReference type="KEGG" id="mmu:69597"/>
<dbReference type="UCSC" id="uc008fmf.1">
    <property type="organism name" value="mouse"/>
</dbReference>
<dbReference type="AGR" id="MGI:1916847"/>
<dbReference type="CTD" id="10939"/>
<dbReference type="MGI" id="MGI:1916847">
    <property type="gene designation" value="Afg3l2"/>
</dbReference>
<dbReference type="VEuPathDB" id="HostDB:ENSMUSG00000024527"/>
<dbReference type="eggNOG" id="KOG0731">
    <property type="taxonomic scope" value="Eukaryota"/>
</dbReference>
<dbReference type="GeneTree" id="ENSGT00940000159566"/>
<dbReference type="HOGENOM" id="CLU_000688_23_1_1"/>
<dbReference type="InParanoid" id="Q8JZQ2"/>
<dbReference type="OMA" id="INWFQEL"/>
<dbReference type="OrthoDB" id="1413014at2759"/>
<dbReference type="PhylomeDB" id="Q8JZQ2"/>
<dbReference type="TreeFam" id="TF105004"/>
<dbReference type="BRENDA" id="3.4.24.B18">
    <property type="organism ID" value="3474"/>
</dbReference>
<dbReference type="Reactome" id="R-MMU-8949664">
    <property type="pathway name" value="Processing of SMDT1"/>
</dbReference>
<dbReference type="Reactome" id="R-MMU-9837999">
    <property type="pathway name" value="Mitochondrial protein degradation"/>
</dbReference>
<dbReference type="BioGRID-ORCS" id="69597">
    <property type="hits" value="9 hits in 78 CRISPR screens"/>
</dbReference>
<dbReference type="CD-CODE" id="CE726F99">
    <property type="entry name" value="Postsynaptic density"/>
</dbReference>
<dbReference type="ChiTaRS" id="Afg3l2">
    <property type="organism name" value="mouse"/>
</dbReference>
<dbReference type="PRO" id="PR:Q8JZQ2"/>
<dbReference type="Proteomes" id="UP000000589">
    <property type="component" value="Chromosome 18"/>
</dbReference>
<dbReference type="RNAct" id="Q8JZQ2">
    <property type="molecule type" value="protein"/>
</dbReference>
<dbReference type="Bgee" id="ENSMUSG00000024527">
    <property type="expression patterns" value="Expressed in interventricular septum and 253 other cell types or tissues"/>
</dbReference>
<dbReference type="GO" id="GO:0005745">
    <property type="term" value="C:m-AAA complex"/>
    <property type="evidence" value="ECO:0000314"/>
    <property type="project" value="UniProtKB"/>
</dbReference>
<dbReference type="GO" id="GO:0005743">
    <property type="term" value="C:mitochondrial inner membrane"/>
    <property type="evidence" value="ECO:0000314"/>
    <property type="project" value="UniProtKB"/>
</dbReference>
<dbReference type="GO" id="GO:0005739">
    <property type="term" value="C:mitochondrion"/>
    <property type="evidence" value="ECO:0007005"/>
    <property type="project" value="MGI"/>
</dbReference>
<dbReference type="GO" id="GO:0005524">
    <property type="term" value="F:ATP binding"/>
    <property type="evidence" value="ECO:0007669"/>
    <property type="project" value="UniProtKB-KW"/>
</dbReference>
<dbReference type="GO" id="GO:0016887">
    <property type="term" value="F:ATP hydrolysis activity"/>
    <property type="evidence" value="ECO:0000250"/>
    <property type="project" value="UniProtKB"/>
</dbReference>
<dbReference type="GO" id="GO:0004176">
    <property type="term" value="F:ATP-dependent peptidase activity"/>
    <property type="evidence" value="ECO:0007669"/>
    <property type="project" value="InterPro"/>
</dbReference>
<dbReference type="GO" id="GO:0140567">
    <property type="term" value="F:membrane protein dislocase activity"/>
    <property type="evidence" value="ECO:0000250"/>
    <property type="project" value="UniProtKB"/>
</dbReference>
<dbReference type="GO" id="GO:0004222">
    <property type="term" value="F:metalloendopeptidase activity"/>
    <property type="evidence" value="ECO:0000250"/>
    <property type="project" value="UniProtKB"/>
</dbReference>
<dbReference type="GO" id="GO:0008237">
    <property type="term" value="F:metallopeptidase activity"/>
    <property type="evidence" value="ECO:0000315"/>
    <property type="project" value="UniProtKB"/>
</dbReference>
<dbReference type="GO" id="GO:0008270">
    <property type="term" value="F:zinc ion binding"/>
    <property type="evidence" value="ECO:0007669"/>
    <property type="project" value="InterPro"/>
</dbReference>
<dbReference type="GO" id="GO:0007409">
    <property type="term" value="P:axonogenesis"/>
    <property type="evidence" value="ECO:0000315"/>
    <property type="project" value="MGI"/>
</dbReference>
<dbReference type="GO" id="GO:0036444">
    <property type="term" value="P:calcium import into the mitochondrion"/>
    <property type="evidence" value="ECO:0000250"/>
    <property type="project" value="UniProtKB"/>
</dbReference>
<dbReference type="GO" id="GO:0072753">
    <property type="term" value="P:cellular response to glutathione"/>
    <property type="evidence" value="ECO:0000250"/>
    <property type="project" value="UniProtKB"/>
</dbReference>
<dbReference type="GO" id="GO:0042407">
    <property type="term" value="P:cristae formation"/>
    <property type="evidence" value="ECO:0000316"/>
    <property type="project" value="MGI"/>
</dbReference>
<dbReference type="GO" id="GO:0033619">
    <property type="term" value="P:membrane protein proteolysis"/>
    <property type="evidence" value="ECO:0007669"/>
    <property type="project" value="Ensembl"/>
</dbReference>
<dbReference type="GO" id="GO:0051560">
    <property type="term" value="P:mitochondrial calcium ion homeostasis"/>
    <property type="evidence" value="ECO:0000250"/>
    <property type="project" value="UniProtKB"/>
</dbReference>
<dbReference type="GO" id="GO:0008053">
    <property type="term" value="P:mitochondrial fusion"/>
    <property type="evidence" value="ECO:0000316"/>
    <property type="project" value="MGI"/>
</dbReference>
<dbReference type="GO" id="GO:0034982">
    <property type="term" value="P:mitochondrial protein processing"/>
    <property type="evidence" value="ECO:0000314"/>
    <property type="project" value="MGI"/>
</dbReference>
<dbReference type="GO" id="GO:0141164">
    <property type="term" value="P:mitochondrial protein quality control"/>
    <property type="evidence" value="ECO:0000250"/>
    <property type="project" value="UniProtKB"/>
</dbReference>
<dbReference type="GO" id="GO:0007005">
    <property type="term" value="P:mitochondrion organization"/>
    <property type="evidence" value="ECO:0000316"/>
    <property type="project" value="MGI"/>
</dbReference>
<dbReference type="GO" id="GO:0055001">
    <property type="term" value="P:muscle cell development"/>
    <property type="evidence" value="ECO:0000315"/>
    <property type="project" value="MGI"/>
</dbReference>
<dbReference type="GO" id="GO:0042552">
    <property type="term" value="P:myelination"/>
    <property type="evidence" value="ECO:0000315"/>
    <property type="project" value="MGI"/>
</dbReference>
<dbReference type="GO" id="GO:0021675">
    <property type="term" value="P:nerve development"/>
    <property type="evidence" value="ECO:0000315"/>
    <property type="project" value="MGI"/>
</dbReference>
<dbReference type="GO" id="GO:0007528">
    <property type="term" value="P:neuromuscular junction development"/>
    <property type="evidence" value="ECO:0000315"/>
    <property type="project" value="MGI"/>
</dbReference>
<dbReference type="GO" id="GO:0016540">
    <property type="term" value="P:protein autoprocessing"/>
    <property type="evidence" value="ECO:0000315"/>
    <property type="project" value="UniProtKB"/>
</dbReference>
<dbReference type="GO" id="GO:0030163">
    <property type="term" value="P:protein catabolic process"/>
    <property type="evidence" value="ECO:0000250"/>
    <property type="project" value="UniProtKB"/>
</dbReference>
<dbReference type="GO" id="GO:0051604">
    <property type="term" value="P:protein maturation"/>
    <property type="evidence" value="ECO:0000315"/>
    <property type="project" value="UniProtKB"/>
</dbReference>
<dbReference type="GO" id="GO:0016485">
    <property type="term" value="P:protein processing"/>
    <property type="evidence" value="ECO:0000314"/>
    <property type="project" value="UniProtKB"/>
</dbReference>
<dbReference type="GO" id="GO:0110097">
    <property type="term" value="P:regulation of calcium import into the mitochondrion"/>
    <property type="evidence" value="ECO:0000315"/>
    <property type="project" value="UniProtKB"/>
</dbReference>
<dbReference type="GO" id="GO:0040014">
    <property type="term" value="P:regulation of multicellular organism growth"/>
    <property type="evidence" value="ECO:0000315"/>
    <property type="project" value="MGI"/>
</dbReference>
<dbReference type="GO" id="GO:0060013">
    <property type="term" value="P:righting reflex"/>
    <property type="evidence" value="ECO:0000315"/>
    <property type="project" value="MGI"/>
</dbReference>
<dbReference type="CDD" id="cd19501">
    <property type="entry name" value="RecA-like_FtsH"/>
    <property type="match status" value="1"/>
</dbReference>
<dbReference type="FunFam" id="1.10.8.60:FF:000019">
    <property type="entry name" value="AFG3-like AAA ATPase 2"/>
    <property type="match status" value="1"/>
</dbReference>
<dbReference type="FunFam" id="1.20.58.760:FF:000003">
    <property type="entry name" value="AFG3-like AAA ATPase 2"/>
    <property type="match status" value="1"/>
</dbReference>
<dbReference type="FunFam" id="3.40.1690.20:FF:000001">
    <property type="entry name" value="AFG3-like AAA ATPase 2"/>
    <property type="match status" value="1"/>
</dbReference>
<dbReference type="FunFam" id="3.40.50.300:FF:000001">
    <property type="entry name" value="ATP-dependent zinc metalloprotease FtsH"/>
    <property type="match status" value="1"/>
</dbReference>
<dbReference type="Gene3D" id="1.10.8.60">
    <property type="match status" value="1"/>
</dbReference>
<dbReference type="Gene3D" id="3.40.1690.20">
    <property type="match status" value="1"/>
</dbReference>
<dbReference type="Gene3D" id="3.40.50.300">
    <property type="entry name" value="P-loop containing nucleotide triphosphate hydrolases"/>
    <property type="match status" value="1"/>
</dbReference>
<dbReference type="Gene3D" id="1.20.58.760">
    <property type="entry name" value="Peptidase M41"/>
    <property type="match status" value="1"/>
</dbReference>
<dbReference type="HAMAP" id="MF_01458">
    <property type="entry name" value="FtsH"/>
    <property type="match status" value="1"/>
</dbReference>
<dbReference type="InterPro" id="IPR003593">
    <property type="entry name" value="AAA+_ATPase"/>
</dbReference>
<dbReference type="InterPro" id="IPR041569">
    <property type="entry name" value="AAA_lid_3"/>
</dbReference>
<dbReference type="InterPro" id="IPR050928">
    <property type="entry name" value="ATP-dep_Zn_Metalloprotease"/>
</dbReference>
<dbReference type="InterPro" id="IPR003959">
    <property type="entry name" value="ATPase_AAA_core"/>
</dbReference>
<dbReference type="InterPro" id="IPR003960">
    <property type="entry name" value="ATPase_AAA_CS"/>
</dbReference>
<dbReference type="InterPro" id="IPR005936">
    <property type="entry name" value="FtsH"/>
</dbReference>
<dbReference type="InterPro" id="IPR027417">
    <property type="entry name" value="P-loop_NTPase"/>
</dbReference>
<dbReference type="InterPro" id="IPR011546">
    <property type="entry name" value="Pept_M41_FtsH_extracell"/>
</dbReference>
<dbReference type="InterPro" id="IPR000642">
    <property type="entry name" value="Peptidase_M41"/>
</dbReference>
<dbReference type="InterPro" id="IPR037219">
    <property type="entry name" value="Peptidase_M41-like"/>
</dbReference>
<dbReference type="NCBIfam" id="TIGR01241">
    <property type="entry name" value="FtsH_fam"/>
    <property type="match status" value="1"/>
</dbReference>
<dbReference type="PANTHER" id="PTHR43655:SF9">
    <property type="entry name" value="AFG3-LIKE PROTEIN 2"/>
    <property type="match status" value="1"/>
</dbReference>
<dbReference type="PANTHER" id="PTHR43655">
    <property type="entry name" value="ATP-DEPENDENT PROTEASE"/>
    <property type="match status" value="1"/>
</dbReference>
<dbReference type="Pfam" id="PF00004">
    <property type="entry name" value="AAA"/>
    <property type="match status" value="1"/>
</dbReference>
<dbReference type="Pfam" id="PF17862">
    <property type="entry name" value="AAA_lid_3"/>
    <property type="match status" value="1"/>
</dbReference>
<dbReference type="Pfam" id="PF06480">
    <property type="entry name" value="FtsH_ext"/>
    <property type="match status" value="1"/>
</dbReference>
<dbReference type="Pfam" id="PF01434">
    <property type="entry name" value="Peptidase_M41"/>
    <property type="match status" value="1"/>
</dbReference>
<dbReference type="SMART" id="SM00382">
    <property type="entry name" value="AAA"/>
    <property type="match status" value="1"/>
</dbReference>
<dbReference type="SUPFAM" id="SSF140990">
    <property type="entry name" value="FtsH protease domain-like"/>
    <property type="match status" value="1"/>
</dbReference>
<dbReference type="SUPFAM" id="SSF52540">
    <property type="entry name" value="P-loop containing nucleoside triphosphate hydrolases"/>
    <property type="match status" value="1"/>
</dbReference>
<dbReference type="PROSITE" id="PS00674">
    <property type="entry name" value="AAA"/>
    <property type="match status" value="1"/>
</dbReference>
<proteinExistence type="evidence at protein level"/>
<gene>
    <name evidence="19 22" type="primary">Afg3l2</name>
</gene>
<evidence type="ECO:0000250" key="1">
    <source>
        <dbReference type="UniProtKB" id="Q9Y4W6"/>
    </source>
</evidence>
<evidence type="ECO:0000255" key="2"/>
<evidence type="ECO:0000256" key="3">
    <source>
        <dbReference type="SAM" id="MobiDB-lite"/>
    </source>
</evidence>
<evidence type="ECO:0000269" key="4">
    <source>
    </source>
</evidence>
<evidence type="ECO:0000269" key="5">
    <source>
    </source>
</evidence>
<evidence type="ECO:0000269" key="6">
    <source>
    </source>
</evidence>
<evidence type="ECO:0000269" key="7">
    <source>
    </source>
</evidence>
<evidence type="ECO:0000269" key="8">
    <source>
    </source>
</evidence>
<evidence type="ECO:0000269" key="9">
    <source>
    </source>
</evidence>
<evidence type="ECO:0000269" key="10">
    <source>
    </source>
</evidence>
<evidence type="ECO:0000269" key="11">
    <source>
    </source>
</evidence>
<evidence type="ECO:0000269" key="12">
    <source>
    </source>
</evidence>
<evidence type="ECO:0000269" key="13">
    <source>
    </source>
</evidence>
<evidence type="ECO:0000269" key="14">
    <source>
    </source>
</evidence>
<evidence type="ECO:0000269" key="15">
    <source>
    </source>
</evidence>
<evidence type="ECO:0000269" key="16">
    <source>
    </source>
</evidence>
<evidence type="ECO:0000269" key="17">
    <source>
    </source>
</evidence>
<evidence type="ECO:0000269" key="18">
    <source>
    </source>
</evidence>
<evidence type="ECO:0000303" key="19">
    <source>
    </source>
</evidence>
<evidence type="ECO:0000305" key="20"/>
<evidence type="ECO:0000305" key="21">
    <source>
    </source>
</evidence>
<evidence type="ECO:0000312" key="22">
    <source>
        <dbReference type="MGI" id="MGI:1916847"/>
    </source>
</evidence>
<evidence type="ECO:0007744" key="23">
    <source>
    </source>
</evidence>
<protein>
    <recommendedName>
        <fullName evidence="20">Mitochondrial inner membrane m-AAA protease component AFG3L2</fullName>
        <ecNumber evidence="8">3.4.24.-</ecNumber>
        <ecNumber evidence="1">3.6.-.-</ecNumber>
    </recommendedName>
    <alternativeName>
        <fullName evidence="20">AFG3-like protein 2</fullName>
    </alternativeName>
</protein>